<comment type="function">
    <text evidence="1">Fluoride-specific ion channel. Important for reducing fluoride concentration in the cell, thus reducing its toxicity.</text>
</comment>
<comment type="catalytic activity">
    <reaction evidence="1">
        <text>fluoride(in) = fluoride(out)</text>
        <dbReference type="Rhea" id="RHEA:76159"/>
        <dbReference type="ChEBI" id="CHEBI:17051"/>
    </reaction>
    <physiologicalReaction direction="left-to-right" evidence="1">
        <dbReference type="Rhea" id="RHEA:76160"/>
    </physiologicalReaction>
</comment>
<comment type="activity regulation">
    <text evidence="1">Na(+) is not transported, but it plays an essential structural role and its presence is essential for fluoride channel function.</text>
</comment>
<comment type="subcellular location">
    <subcellularLocation>
        <location evidence="1">Cell membrane</location>
        <topology evidence="1">Multi-pass membrane protein</topology>
    </subcellularLocation>
</comment>
<comment type="similarity">
    <text evidence="1">Belongs to the fluoride channel Fluc/FEX (TC 1.A.43) family.</text>
</comment>
<evidence type="ECO:0000255" key="1">
    <source>
        <dbReference type="HAMAP-Rule" id="MF_00454"/>
    </source>
</evidence>
<gene>
    <name evidence="1" type="primary">fluC3</name>
    <name evidence="1" type="synonym">crcB3</name>
    <name type="ordered locus">MA_4089</name>
</gene>
<feature type="chain" id="PRO_0000110227" description="Fluoride-specific ion channel FluC 3">
    <location>
        <begin position="1"/>
        <end position="111"/>
    </location>
</feature>
<feature type="transmembrane region" description="Helical" evidence="1">
    <location>
        <begin position="26"/>
        <end position="46"/>
    </location>
</feature>
<feature type="transmembrane region" description="Helical" evidence="1">
    <location>
        <begin position="53"/>
        <end position="73"/>
    </location>
</feature>
<feature type="transmembrane region" description="Helical" evidence="1">
    <location>
        <begin position="91"/>
        <end position="111"/>
    </location>
</feature>
<feature type="binding site" evidence="1">
    <location>
        <position position="63"/>
    </location>
    <ligand>
        <name>Na(+)</name>
        <dbReference type="ChEBI" id="CHEBI:29101"/>
        <note>structural</note>
    </ligand>
</feature>
<feature type="binding site" evidence="1">
    <location>
        <position position="66"/>
    </location>
    <ligand>
        <name>Na(+)</name>
        <dbReference type="ChEBI" id="CHEBI:29101"/>
        <note>structural</note>
    </ligand>
</feature>
<dbReference type="EMBL" id="AE010299">
    <property type="protein sequence ID" value="AAM07437.1"/>
    <property type="molecule type" value="Genomic_DNA"/>
</dbReference>
<dbReference type="SMR" id="Q8TIQ3"/>
<dbReference type="STRING" id="188937.MA_4089"/>
<dbReference type="EnsemblBacteria" id="AAM07437">
    <property type="protein sequence ID" value="AAM07437"/>
    <property type="gene ID" value="MA_4089"/>
</dbReference>
<dbReference type="KEGG" id="mac:MA_4089"/>
<dbReference type="HOGENOM" id="CLU_114342_2_3_2"/>
<dbReference type="InParanoid" id="Q8TIQ3"/>
<dbReference type="PhylomeDB" id="Q8TIQ3"/>
<dbReference type="Proteomes" id="UP000002487">
    <property type="component" value="Chromosome"/>
</dbReference>
<dbReference type="GO" id="GO:0005886">
    <property type="term" value="C:plasma membrane"/>
    <property type="evidence" value="ECO:0000318"/>
    <property type="project" value="GO_Central"/>
</dbReference>
<dbReference type="GO" id="GO:0062054">
    <property type="term" value="F:fluoride channel activity"/>
    <property type="evidence" value="ECO:0007669"/>
    <property type="project" value="UniProtKB-UniRule"/>
</dbReference>
<dbReference type="GO" id="GO:1903425">
    <property type="term" value="F:fluoride transmembrane transporter activity"/>
    <property type="evidence" value="ECO:0000318"/>
    <property type="project" value="GO_Central"/>
</dbReference>
<dbReference type="GO" id="GO:0046872">
    <property type="term" value="F:metal ion binding"/>
    <property type="evidence" value="ECO:0007669"/>
    <property type="project" value="UniProtKB-KW"/>
</dbReference>
<dbReference type="GO" id="GO:0140114">
    <property type="term" value="P:cellular detoxification of fluoride"/>
    <property type="evidence" value="ECO:0007669"/>
    <property type="project" value="UniProtKB-UniRule"/>
</dbReference>
<dbReference type="GO" id="GO:1903424">
    <property type="term" value="P:fluoride transmembrane transport"/>
    <property type="evidence" value="ECO:0000318"/>
    <property type="project" value="GO_Central"/>
</dbReference>
<dbReference type="HAMAP" id="MF_00454">
    <property type="entry name" value="FluC"/>
    <property type="match status" value="1"/>
</dbReference>
<dbReference type="InterPro" id="IPR003691">
    <property type="entry name" value="FluC"/>
</dbReference>
<dbReference type="NCBIfam" id="TIGR00494">
    <property type="entry name" value="crcB"/>
    <property type="match status" value="1"/>
</dbReference>
<dbReference type="PANTHER" id="PTHR28259">
    <property type="entry name" value="FLUORIDE EXPORT PROTEIN 1-RELATED"/>
    <property type="match status" value="1"/>
</dbReference>
<dbReference type="PANTHER" id="PTHR28259:SF1">
    <property type="entry name" value="FLUORIDE EXPORT PROTEIN 1-RELATED"/>
    <property type="match status" value="1"/>
</dbReference>
<dbReference type="Pfam" id="PF02537">
    <property type="entry name" value="CRCB"/>
    <property type="match status" value="1"/>
</dbReference>
<protein>
    <recommendedName>
        <fullName evidence="1">Fluoride-specific ion channel FluC 3</fullName>
    </recommendedName>
</protein>
<organism>
    <name type="scientific">Methanosarcina acetivorans (strain ATCC 35395 / DSM 2834 / JCM 12185 / C2A)</name>
    <dbReference type="NCBI Taxonomy" id="188937"/>
    <lineage>
        <taxon>Archaea</taxon>
        <taxon>Methanobacteriati</taxon>
        <taxon>Methanobacteriota</taxon>
        <taxon>Stenosarchaea group</taxon>
        <taxon>Methanomicrobia</taxon>
        <taxon>Methanosarcinales</taxon>
        <taxon>Methanosarcinaceae</taxon>
        <taxon>Methanosarcina</taxon>
    </lineage>
</organism>
<proteinExistence type="inferred from homology"/>
<sequence length="111" mass="12023">MIGTGGFIGASLRYTISSRVPKIQNIPAGTLTVNLLGSIVLALLTFSSEPESVVYLVNIGMLGSFTTFSTFAYETFRLLEDGQNISFFLNIFLNVMLCLLGVSIAYLALML</sequence>
<name>FLUC3_METAC</name>
<accession>Q8TIQ3</accession>
<keyword id="KW-1003">Cell membrane</keyword>
<keyword id="KW-0407">Ion channel</keyword>
<keyword id="KW-0406">Ion transport</keyword>
<keyword id="KW-0472">Membrane</keyword>
<keyword id="KW-0479">Metal-binding</keyword>
<keyword id="KW-1185">Reference proteome</keyword>
<keyword id="KW-0915">Sodium</keyword>
<keyword id="KW-0812">Transmembrane</keyword>
<keyword id="KW-1133">Transmembrane helix</keyword>
<keyword id="KW-0813">Transport</keyword>
<reference key="1">
    <citation type="journal article" date="2002" name="Genome Res.">
        <title>The genome of Methanosarcina acetivorans reveals extensive metabolic and physiological diversity.</title>
        <authorList>
            <person name="Galagan J.E."/>
            <person name="Nusbaum C."/>
            <person name="Roy A."/>
            <person name="Endrizzi M.G."/>
            <person name="Macdonald P."/>
            <person name="FitzHugh W."/>
            <person name="Calvo S."/>
            <person name="Engels R."/>
            <person name="Smirnov S."/>
            <person name="Atnoor D."/>
            <person name="Brown A."/>
            <person name="Allen N."/>
            <person name="Naylor J."/>
            <person name="Stange-Thomann N."/>
            <person name="DeArellano K."/>
            <person name="Johnson R."/>
            <person name="Linton L."/>
            <person name="McEwan P."/>
            <person name="McKernan K."/>
            <person name="Talamas J."/>
            <person name="Tirrell A."/>
            <person name="Ye W."/>
            <person name="Zimmer A."/>
            <person name="Barber R.D."/>
            <person name="Cann I."/>
            <person name="Graham D.E."/>
            <person name="Grahame D.A."/>
            <person name="Guss A.M."/>
            <person name="Hedderich R."/>
            <person name="Ingram-Smith C."/>
            <person name="Kuettner H.C."/>
            <person name="Krzycki J.A."/>
            <person name="Leigh J.A."/>
            <person name="Li W."/>
            <person name="Liu J."/>
            <person name="Mukhopadhyay B."/>
            <person name="Reeve J.N."/>
            <person name="Smith K."/>
            <person name="Springer T.A."/>
            <person name="Umayam L.A."/>
            <person name="White O."/>
            <person name="White R.H."/>
            <person name="de Macario E.C."/>
            <person name="Ferry J.G."/>
            <person name="Jarrell K.F."/>
            <person name="Jing H."/>
            <person name="Macario A.J.L."/>
            <person name="Paulsen I.T."/>
            <person name="Pritchett M."/>
            <person name="Sowers K.R."/>
            <person name="Swanson R.V."/>
            <person name="Zinder S.H."/>
            <person name="Lander E."/>
            <person name="Metcalf W.W."/>
            <person name="Birren B."/>
        </authorList>
    </citation>
    <scope>NUCLEOTIDE SEQUENCE [LARGE SCALE GENOMIC DNA]</scope>
    <source>
        <strain>ATCC 35395 / DSM 2834 / JCM 12185 / C2A</strain>
    </source>
</reference>